<proteinExistence type="inferred from homology"/>
<gene>
    <name type="ordered locus">Shal_2088</name>
</gene>
<protein>
    <recommendedName>
        <fullName evidence="1">4-hydroxy-2-oxovalerate aldolase</fullName>
        <shortName evidence="1">HOA</shortName>
        <ecNumber evidence="1">4.1.3.39</ecNumber>
    </recommendedName>
    <alternativeName>
        <fullName evidence="1">4-hydroxy-2-keto-pentanoic acid aldolase</fullName>
    </alternativeName>
    <alternativeName>
        <fullName evidence="1">4-hydroxy-2-oxopentanoate aldolase</fullName>
    </alternativeName>
</protein>
<accession>B0TTS9</accession>
<comment type="catalytic activity">
    <reaction evidence="1">
        <text>(S)-4-hydroxy-2-oxopentanoate = acetaldehyde + pyruvate</text>
        <dbReference type="Rhea" id="RHEA:22624"/>
        <dbReference type="ChEBI" id="CHEBI:15343"/>
        <dbReference type="ChEBI" id="CHEBI:15361"/>
        <dbReference type="ChEBI" id="CHEBI:73143"/>
        <dbReference type="EC" id="4.1.3.39"/>
    </reaction>
</comment>
<comment type="similarity">
    <text evidence="1">Belongs to the 4-hydroxy-2-oxovalerate aldolase family.</text>
</comment>
<organism>
    <name type="scientific">Shewanella halifaxensis (strain HAW-EB4)</name>
    <dbReference type="NCBI Taxonomy" id="458817"/>
    <lineage>
        <taxon>Bacteria</taxon>
        <taxon>Pseudomonadati</taxon>
        <taxon>Pseudomonadota</taxon>
        <taxon>Gammaproteobacteria</taxon>
        <taxon>Alteromonadales</taxon>
        <taxon>Shewanellaceae</taxon>
        <taxon>Shewanella</taxon>
    </lineage>
</organism>
<sequence>MNLTGKKVILHDMSLRDGMHARQHQITLKEMVDVATGLDAAGVPLIEVTHGDGLGGASLNYGFPAHTDEEYLSAVIPKMKQAKVSALLLPGIGTVDHLRMAHQLGVNTIRVATHCTEADVSGQHIALSRDLGLDTVGFLMMAHMVSPEKLLEQAKLMESYGANCIYCTDSAGYMLPGDVTSHIERLRGELKSDTQIGFHGHHNMGMSIANSLAAIEAGAERIDGSVAGLGAGAGNTPLEVFVAVLERMQVHHGVNLYDIMDVAEDLVTPMMDQPIRIDRDALTLGYAGVYSSFLLFAQRAEKKYGVPARDILLELGRRGTVGGQEDMIDDTAMNMARELA</sequence>
<reference key="1">
    <citation type="submission" date="2008-01" db="EMBL/GenBank/DDBJ databases">
        <title>Complete sequence of Shewanella halifaxensis HAW-EB4.</title>
        <authorList>
            <consortium name="US DOE Joint Genome Institute"/>
            <person name="Copeland A."/>
            <person name="Lucas S."/>
            <person name="Lapidus A."/>
            <person name="Glavina del Rio T."/>
            <person name="Dalin E."/>
            <person name="Tice H."/>
            <person name="Bruce D."/>
            <person name="Goodwin L."/>
            <person name="Pitluck S."/>
            <person name="Sims D."/>
            <person name="Brettin T."/>
            <person name="Detter J.C."/>
            <person name="Han C."/>
            <person name="Kuske C.R."/>
            <person name="Schmutz J."/>
            <person name="Larimer F."/>
            <person name="Land M."/>
            <person name="Hauser L."/>
            <person name="Kyrpides N."/>
            <person name="Kim E."/>
            <person name="Zhao J.-S."/>
            <person name="Richardson P."/>
        </authorList>
    </citation>
    <scope>NUCLEOTIDE SEQUENCE [LARGE SCALE GENOMIC DNA]</scope>
    <source>
        <strain>HAW-EB4</strain>
    </source>
</reference>
<keyword id="KW-0058">Aromatic hydrocarbons catabolism</keyword>
<keyword id="KW-0456">Lyase</keyword>
<keyword id="KW-0464">Manganese</keyword>
<keyword id="KW-0479">Metal-binding</keyword>
<name>HOA_SHEHH</name>
<dbReference type="EC" id="4.1.3.39" evidence="1"/>
<dbReference type="EMBL" id="CP000931">
    <property type="protein sequence ID" value="ABZ76647.1"/>
    <property type="molecule type" value="Genomic_DNA"/>
</dbReference>
<dbReference type="RefSeq" id="WP_012277177.1">
    <property type="nucleotide sequence ID" value="NC_010334.1"/>
</dbReference>
<dbReference type="SMR" id="B0TTS9"/>
<dbReference type="STRING" id="458817.Shal_2088"/>
<dbReference type="KEGG" id="shl:Shal_2088"/>
<dbReference type="eggNOG" id="COG0119">
    <property type="taxonomic scope" value="Bacteria"/>
</dbReference>
<dbReference type="HOGENOM" id="CLU_049173_0_0_6"/>
<dbReference type="OrthoDB" id="9803573at2"/>
<dbReference type="Proteomes" id="UP000001317">
    <property type="component" value="Chromosome"/>
</dbReference>
<dbReference type="GO" id="GO:0003852">
    <property type="term" value="F:2-isopropylmalate synthase activity"/>
    <property type="evidence" value="ECO:0007669"/>
    <property type="project" value="TreeGrafter"/>
</dbReference>
<dbReference type="GO" id="GO:0008701">
    <property type="term" value="F:4-hydroxy-2-oxovalerate aldolase activity"/>
    <property type="evidence" value="ECO:0007669"/>
    <property type="project" value="UniProtKB-UniRule"/>
</dbReference>
<dbReference type="GO" id="GO:0030145">
    <property type="term" value="F:manganese ion binding"/>
    <property type="evidence" value="ECO:0007669"/>
    <property type="project" value="UniProtKB-UniRule"/>
</dbReference>
<dbReference type="GO" id="GO:0009056">
    <property type="term" value="P:catabolic process"/>
    <property type="evidence" value="ECO:0007669"/>
    <property type="project" value="UniProtKB-KW"/>
</dbReference>
<dbReference type="GO" id="GO:0009098">
    <property type="term" value="P:L-leucine biosynthetic process"/>
    <property type="evidence" value="ECO:0007669"/>
    <property type="project" value="TreeGrafter"/>
</dbReference>
<dbReference type="CDD" id="cd07943">
    <property type="entry name" value="DRE_TIM_HOA"/>
    <property type="match status" value="1"/>
</dbReference>
<dbReference type="Gene3D" id="1.10.8.60">
    <property type="match status" value="1"/>
</dbReference>
<dbReference type="Gene3D" id="3.20.20.70">
    <property type="entry name" value="Aldolase class I"/>
    <property type="match status" value="1"/>
</dbReference>
<dbReference type="HAMAP" id="MF_01656">
    <property type="entry name" value="HOA"/>
    <property type="match status" value="1"/>
</dbReference>
<dbReference type="InterPro" id="IPR050073">
    <property type="entry name" value="2-IPM_HCS-like"/>
</dbReference>
<dbReference type="InterPro" id="IPR017629">
    <property type="entry name" value="4OH_2_O-val_aldolase"/>
</dbReference>
<dbReference type="InterPro" id="IPR013785">
    <property type="entry name" value="Aldolase_TIM"/>
</dbReference>
<dbReference type="InterPro" id="IPR012425">
    <property type="entry name" value="DmpG_comm"/>
</dbReference>
<dbReference type="InterPro" id="IPR035685">
    <property type="entry name" value="DRE_TIM_HOA"/>
</dbReference>
<dbReference type="InterPro" id="IPR000891">
    <property type="entry name" value="PYR_CT"/>
</dbReference>
<dbReference type="NCBIfam" id="TIGR03217">
    <property type="entry name" value="4OH_2_O_val_ald"/>
    <property type="match status" value="1"/>
</dbReference>
<dbReference type="NCBIfam" id="NF006049">
    <property type="entry name" value="PRK08195.1"/>
    <property type="match status" value="1"/>
</dbReference>
<dbReference type="PANTHER" id="PTHR10277:SF9">
    <property type="entry name" value="2-ISOPROPYLMALATE SYNTHASE 1, CHLOROPLASTIC-RELATED"/>
    <property type="match status" value="1"/>
</dbReference>
<dbReference type="PANTHER" id="PTHR10277">
    <property type="entry name" value="HOMOCITRATE SYNTHASE-RELATED"/>
    <property type="match status" value="1"/>
</dbReference>
<dbReference type="Pfam" id="PF07836">
    <property type="entry name" value="DmpG_comm"/>
    <property type="match status" value="1"/>
</dbReference>
<dbReference type="Pfam" id="PF00682">
    <property type="entry name" value="HMGL-like"/>
    <property type="match status" value="1"/>
</dbReference>
<dbReference type="SUPFAM" id="SSF51569">
    <property type="entry name" value="Aldolase"/>
    <property type="match status" value="1"/>
</dbReference>
<dbReference type="SUPFAM" id="SSF89000">
    <property type="entry name" value="post-HMGL domain-like"/>
    <property type="match status" value="1"/>
</dbReference>
<dbReference type="PROSITE" id="PS50991">
    <property type="entry name" value="PYR_CT"/>
    <property type="match status" value="1"/>
</dbReference>
<evidence type="ECO:0000255" key="1">
    <source>
        <dbReference type="HAMAP-Rule" id="MF_01656"/>
    </source>
</evidence>
<feature type="chain" id="PRO_0000387915" description="4-hydroxy-2-oxovalerate aldolase">
    <location>
        <begin position="1"/>
        <end position="340"/>
    </location>
</feature>
<feature type="domain" description="Pyruvate carboxyltransferase" evidence="1">
    <location>
        <begin position="8"/>
        <end position="260"/>
    </location>
</feature>
<feature type="active site" description="Proton acceptor" evidence="1">
    <location>
        <position position="20"/>
    </location>
</feature>
<feature type="binding site" evidence="1">
    <location>
        <begin position="16"/>
        <end position="17"/>
    </location>
    <ligand>
        <name>substrate</name>
    </ligand>
</feature>
<feature type="binding site" evidence="1">
    <location>
        <position position="17"/>
    </location>
    <ligand>
        <name>Mn(2+)</name>
        <dbReference type="ChEBI" id="CHEBI:29035"/>
    </ligand>
</feature>
<feature type="binding site" evidence="1">
    <location>
        <position position="170"/>
    </location>
    <ligand>
        <name>substrate</name>
    </ligand>
</feature>
<feature type="binding site" evidence="1">
    <location>
        <position position="199"/>
    </location>
    <ligand>
        <name>Mn(2+)</name>
        <dbReference type="ChEBI" id="CHEBI:29035"/>
    </ligand>
</feature>
<feature type="binding site" evidence="1">
    <location>
        <position position="199"/>
    </location>
    <ligand>
        <name>substrate</name>
    </ligand>
</feature>
<feature type="binding site" evidence="1">
    <location>
        <position position="201"/>
    </location>
    <ligand>
        <name>Mn(2+)</name>
        <dbReference type="ChEBI" id="CHEBI:29035"/>
    </ligand>
</feature>
<feature type="binding site" evidence="1">
    <location>
        <position position="290"/>
    </location>
    <ligand>
        <name>substrate</name>
    </ligand>
</feature>
<feature type="site" description="Transition state stabilizer" evidence="1">
    <location>
        <position position="16"/>
    </location>
</feature>